<dbReference type="EC" id="7.6.2.-" evidence="1"/>
<dbReference type="EMBL" id="CP000302">
    <property type="protein sequence ID" value="ABE54961.1"/>
    <property type="molecule type" value="Genomic_DNA"/>
</dbReference>
<dbReference type="RefSeq" id="WP_011496119.1">
    <property type="nucleotide sequence ID" value="NC_007954.1"/>
</dbReference>
<dbReference type="SMR" id="Q12NL5"/>
<dbReference type="STRING" id="318161.Sden_1677"/>
<dbReference type="KEGG" id="sdn:Sden_1677"/>
<dbReference type="eggNOG" id="COG1136">
    <property type="taxonomic scope" value="Bacteria"/>
</dbReference>
<dbReference type="HOGENOM" id="CLU_000604_1_22_6"/>
<dbReference type="OrthoDB" id="9801477at2"/>
<dbReference type="Proteomes" id="UP000001982">
    <property type="component" value="Chromosome"/>
</dbReference>
<dbReference type="GO" id="GO:0005886">
    <property type="term" value="C:plasma membrane"/>
    <property type="evidence" value="ECO:0007669"/>
    <property type="project" value="UniProtKB-SubCell"/>
</dbReference>
<dbReference type="GO" id="GO:0005524">
    <property type="term" value="F:ATP binding"/>
    <property type="evidence" value="ECO:0007669"/>
    <property type="project" value="UniProtKB-KW"/>
</dbReference>
<dbReference type="GO" id="GO:0016887">
    <property type="term" value="F:ATP hydrolysis activity"/>
    <property type="evidence" value="ECO:0007669"/>
    <property type="project" value="InterPro"/>
</dbReference>
<dbReference type="GO" id="GO:0022857">
    <property type="term" value="F:transmembrane transporter activity"/>
    <property type="evidence" value="ECO:0007669"/>
    <property type="project" value="TreeGrafter"/>
</dbReference>
<dbReference type="GO" id="GO:0044874">
    <property type="term" value="P:lipoprotein localization to outer membrane"/>
    <property type="evidence" value="ECO:0007669"/>
    <property type="project" value="TreeGrafter"/>
</dbReference>
<dbReference type="GO" id="GO:0089705">
    <property type="term" value="P:protein localization to outer membrane"/>
    <property type="evidence" value="ECO:0007669"/>
    <property type="project" value="TreeGrafter"/>
</dbReference>
<dbReference type="CDD" id="cd03255">
    <property type="entry name" value="ABC_MJ0796_LolCDE_FtsE"/>
    <property type="match status" value="1"/>
</dbReference>
<dbReference type="FunFam" id="3.40.50.300:FF:000230">
    <property type="entry name" value="Lipoprotein-releasing system ATP-binding protein LolD"/>
    <property type="match status" value="1"/>
</dbReference>
<dbReference type="Gene3D" id="3.40.50.300">
    <property type="entry name" value="P-loop containing nucleotide triphosphate hydrolases"/>
    <property type="match status" value="1"/>
</dbReference>
<dbReference type="InterPro" id="IPR003593">
    <property type="entry name" value="AAA+_ATPase"/>
</dbReference>
<dbReference type="InterPro" id="IPR003439">
    <property type="entry name" value="ABC_transporter-like_ATP-bd"/>
</dbReference>
<dbReference type="InterPro" id="IPR017871">
    <property type="entry name" value="ABC_transporter-like_CS"/>
</dbReference>
<dbReference type="InterPro" id="IPR015854">
    <property type="entry name" value="ABC_transpr_LolD-like"/>
</dbReference>
<dbReference type="InterPro" id="IPR011924">
    <property type="entry name" value="LolD_lipo_ATP-bd"/>
</dbReference>
<dbReference type="InterPro" id="IPR017911">
    <property type="entry name" value="MacB-like_ATP-bd"/>
</dbReference>
<dbReference type="InterPro" id="IPR027417">
    <property type="entry name" value="P-loop_NTPase"/>
</dbReference>
<dbReference type="NCBIfam" id="TIGR02211">
    <property type="entry name" value="LolD_lipo_ex"/>
    <property type="match status" value="1"/>
</dbReference>
<dbReference type="PANTHER" id="PTHR24220">
    <property type="entry name" value="IMPORT ATP-BINDING PROTEIN"/>
    <property type="match status" value="1"/>
</dbReference>
<dbReference type="PANTHER" id="PTHR24220:SF689">
    <property type="entry name" value="LIPOPROTEIN-RELEASING SYSTEM ATP-BINDING PROTEIN LOLD"/>
    <property type="match status" value="1"/>
</dbReference>
<dbReference type="Pfam" id="PF00005">
    <property type="entry name" value="ABC_tran"/>
    <property type="match status" value="1"/>
</dbReference>
<dbReference type="SMART" id="SM00382">
    <property type="entry name" value="AAA"/>
    <property type="match status" value="1"/>
</dbReference>
<dbReference type="SUPFAM" id="SSF52540">
    <property type="entry name" value="P-loop containing nucleoside triphosphate hydrolases"/>
    <property type="match status" value="1"/>
</dbReference>
<dbReference type="PROSITE" id="PS00211">
    <property type="entry name" value="ABC_TRANSPORTER_1"/>
    <property type="match status" value="1"/>
</dbReference>
<dbReference type="PROSITE" id="PS50893">
    <property type="entry name" value="ABC_TRANSPORTER_2"/>
    <property type="match status" value="1"/>
</dbReference>
<dbReference type="PROSITE" id="PS51244">
    <property type="entry name" value="LOLD"/>
    <property type="match status" value="1"/>
</dbReference>
<organism>
    <name type="scientific">Shewanella denitrificans (strain OS217 / ATCC BAA-1090 / DSM 15013)</name>
    <dbReference type="NCBI Taxonomy" id="318161"/>
    <lineage>
        <taxon>Bacteria</taxon>
        <taxon>Pseudomonadati</taxon>
        <taxon>Pseudomonadota</taxon>
        <taxon>Gammaproteobacteria</taxon>
        <taxon>Alteromonadales</taxon>
        <taxon>Shewanellaceae</taxon>
        <taxon>Shewanella</taxon>
    </lineage>
</organism>
<comment type="function">
    <text evidence="1">Part of the ABC transporter complex LolCDE involved in the translocation of mature outer membrane-directed lipoproteins, from the inner membrane to the periplasmic chaperone, LolA. Responsible for the formation of the LolA-lipoprotein complex in an ATP-dependent manner.</text>
</comment>
<comment type="subunit">
    <text evidence="1">The complex is composed of two ATP-binding proteins (LolD) and two transmembrane proteins (LolC and LolE).</text>
</comment>
<comment type="subcellular location">
    <subcellularLocation>
        <location evidence="1">Cell inner membrane</location>
        <topology evidence="1">Peripheral membrane protein</topology>
    </subcellularLocation>
</comment>
<comment type="similarity">
    <text evidence="1">Belongs to the ABC transporter superfamily. Lipoprotein translocase (TC 3.A.1.125) family.</text>
</comment>
<name>LOLD_SHEDO</name>
<sequence>MKPASTRLLAINAVSKVFHDGACETQVLHEVNLTVHRGEQLAIVGSSGSGKSTLLHIMGTLESPTSGTVLLEGENLHQLSSKRQAQIRNQDLGFIYQFHHLLPEFSALENVAMPAFIQGKNKAQTLAEAKALLERVGLGHRLTHLPSQLSGGERQRVAIARALINKPKLVLADEPTGNLDAVSGEAVYGLIRELAEQLGTAFVVVTHDANLAARMDRQVNMKDGILSQSETHR</sequence>
<keyword id="KW-0067">ATP-binding</keyword>
<keyword id="KW-0997">Cell inner membrane</keyword>
<keyword id="KW-1003">Cell membrane</keyword>
<keyword id="KW-0472">Membrane</keyword>
<keyword id="KW-0547">Nucleotide-binding</keyword>
<keyword id="KW-1185">Reference proteome</keyword>
<keyword id="KW-1278">Translocase</keyword>
<keyword id="KW-0813">Transport</keyword>
<reference key="1">
    <citation type="submission" date="2006-03" db="EMBL/GenBank/DDBJ databases">
        <title>Complete sequence of Shewanella denitrificans OS217.</title>
        <authorList>
            <consortium name="US DOE Joint Genome Institute"/>
            <person name="Copeland A."/>
            <person name="Lucas S."/>
            <person name="Lapidus A."/>
            <person name="Barry K."/>
            <person name="Detter J.C."/>
            <person name="Glavina del Rio T."/>
            <person name="Hammon N."/>
            <person name="Israni S."/>
            <person name="Dalin E."/>
            <person name="Tice H."/>
            <person name="Pitluck S."/>
            <person name="Brettin T."/>
            <person name="Bruce D."/>
            <person name="Han C."/>
            <person name="Tapia R."/>
            <person name="Gilna P."/>
            <person name="Kiss H."/>
            <person name="Schmutz J."/>
            <person name="Larimer F."/>
            <person name="Land M."/>
            <person name="Hauser L."/>
            <person name="Kyrpides N."/>
            <person name="Lykidis A."/>
            <person name="Richardson P."/>
        </authorList>
    </citation>
    <scope>NUCLEOTIDE SEQUENCE [LARGE SCALE GENOMIC DNA]</scope>
    <source>
        <strain>OS217 / ATCC BAA-1090 / DSM 15013</strain>
    </source>
</reference>
<protein>
    <recommendedName>
        <fullName evidence="1">Lipoprotein-releasing system ATP-binding protein LolD</fullName>
        <ecNumber evidence="1">7.6.2.-</ecNumber>
    </recommendedName>
</protein>
<proteinExistence type="inferred from homology"/>
<feature type="chain" id="PRO_0000272149" description="Lipoprotein-releasing system ATP-binding protein LolD">
    <location>
        <begin position="1"/>
        <end position="233"/>
    </location>
</feature>
<feature type="domain" description="ABC transporter" evidence="1">
    <location>
        <begin position="9"/>
        <end position="233"/>
    </location>
</feature>
<feature type="binding site" evidence="1">
    <location>
        <begin position="45"/>
        <end position="52"/>
    </location>
    <ligand>
        <name>ATP</name>
        <dbReference type="ChEBI" id="CHEBI:30616"/>
    </ligand>
</feature>
<accession>Q12NL5</accession>
<evidence type="ECO:0000255" key="1">
    <source>
        <dbReference type="HAMAP-Rule" id="MF_01708"/>
    </source>
</evidence>
<gene>
    <name evidence="1" type="primary">lolD</name>
    <name type="ordered locus">Sden_1677</name>
</gene>